<proteinExistence type="inferred from homology"/>
<name>MURA_RHOPA</name>
<accession>Q6N176</accession>
<evidence type="ECO:0000255" key="1">
    <source>
        <dbReference type="HAMAP-Rule" id="MF_00111"/>
    </source>
</evidence>
<dbReference type="EC" id="2.5.1.7" evidence="1"/>
<dbReference type="EMBL" id="BX572607">
    <property type="protein sequence ID" value="CAE29973.1"/>
    <property type="molecule type" value="Genomic_DNA"/>
</dbReference>
<dbReference type="RefSeq" id="WP_011160065.1">
    <property type="nucleotide sequence ID" value="NZ_CP116810.1"/>
</dbReference>
<dbReference type="SMR" id="Q6N176"/>
<dbReference type="STRING" id="258594.RPA4533"/>
<dbReference type="GeneID" id="66895683"/>
<dbReference type="eggNOG" id="COG0766">
    <property type="taxonomic scope" value="Bacteria"/>
</dbReference>
<dbReference type="HOGENOM" id="CLU_027387_0_0_5"/>
<dbReference type="PhylomeDB" id="Q6N176"/>
<dbReference type="UniPathway" id="UPA00219"/>
<dbReference type="GO" id="GO:0005737">
    <property type="term" value="C:cytoplasm"/>
    <property type="evidence" value="ECO:0007669"/>
    <property type="project" value="UniProtKB-SubCell"/>
</dbReference>
<dbReference type="GO" id="GO:0008760">
    <property type="term" value="F:UDP-N-acetylglucosamine 1-carboxyvinyltransferase activity"/>
    <property type="evidence" value="ECO:0007669"/>
    <property type="project" value="UniProtKB-UniRule"/>
</dbReference>
<dbReference type="GO" id="GO:0051301">
    <property type="term" value="P:cell division"/>
    <property type="evidence" value="ECO:0007669"/>
    <property type="project" value="UniProtKB-KW"/>
</dbReference>
<dbReference type="GO" id="GO:0071555">
    <property type="term" value="P:cell wall organization"/>
    <property type="evidence" value="ECO:0007669"/>
    <property type="project" value="UniProtKB-KW"/>
</dbReference>
<dbReference type="GO" id="GO:0009252">
    <property type="term" value="P:peptidoglycan biosynthetic process"/>
    <property type="evidence" value="ECO:0007669"/>
    <property type="project" value="UniProtKB-UniRule"/>
</dbReference>
<dbReference type="GO" id="GO:0008360">
    <property type="term" value="P:regulation of cell shape"/>
    <property type="evidence" value="ECO:0007669"/>
    <property type="project" value="UniProtKB-KW"/>
</dbReference>
<dbReference type="GO" id="GO:0019277">
    <property type="term" value="P:UDP-N-acetylgalactosamine biosynthetic process"/>
    <property type="evidence" value="ECO:0007669"/>
    <property type="project" value="InterPro"/>
</dbReference>
<dbReference type="CDD" id="cd01555">
    <property type="entry name" value="UdpNAET"/>
    <property type="match status" value="1"/>
</dbReference>
<dbReference type="FunFam" id="3.65.10.10:FF:000001">
    <property type="entry name" value="UDP-N-acetylglucosamine 1-carboxyvinyltransferase"/>
    <property type="match status" value="1"/>
</dbReference>
<dbReference type="Gene3D" id="3.65.10.10">
    <property type="entry name" value="Enolpyruvate transferase domain"/>
    <property type="match status" value="2"/>
</dbReference>
<dbReference type="HAMAP" id="MF_00111">
    <property type="entry name" value="MurA"/>
    <property type="match status" value="1"/>
</dbReference>
<dbReference type="InterPro" id="IPR001986">
    <property type="entry name" value="Enolpyruvate_Tfrase_dom"/>
</dbReference>
<dbReference type="InterPro" id="IPR036968">
    <property type="entry name" value="Enolpyruvate_Tfrase_sf"/>
</dbReference>
<dbReference type="InterPro" id="IPR050068">
    <property type="entry name" value="MurA_subfamily"/>
</dbReference>
<dbReference type="InterPro" id="IPR013792">
    <property type="entry name" value="RNA3'P_cycl/enolpyr_Trfase_a/b"/>
</dbReference>
<dbReference type="InterPro" id="IPR005750">
    <property type="entry name" value="UDP_GlcNAc_COvinyl_MurA"/>
</dbReference>
<dbReference type="NCBIfam" id="TIGR01072">
    <property type="entry name" value="murA"/>
    <property type="match status" value="1"/>
</dbReference>
<dbReference type="NCBIfam" id="NF006873">
    <property type="entry name" value="PRK09369.1"/>
    <property type="match status" value="1"/>
</dbReference>
<dbReference type="PANTHER" id="PTHR43783">
    <property type="entry name" value="UDP-N-ACETYLGLUCOSAMINE 1-CARBOXYVINYLTRANSFERASE"/>
    <property type="match status" value="1"/>
</dbReference>
<dbReference type="PANTHER" id="PTHR43783:SF1">
    <property type="entry name" value="UDP-N-ACETYLGLUCOSAMINE 1-CARBOXYVINYLTRANSFERASE"/>
    <property type="match status" value="1"/>
</dbReference>
<dbReference type="Pfam" id="PF00275">
    <property type="entry name" value="EPSP_synthase"/>
    <property type="match status" value="1"/>
</dbReference>
<dbReference type="SUPFAM" id="SSF55205">
    <property type="entry name" value="EPT/RTPC-like"/>
    <property type="match status" value="1"/>
</dbReference>
<organism>
    <name type="scientific">Rhodopseudomonas palustris (strain ATCC BAA-98 / CGA009)</name>
    <dbReference type="NCBI Taxonomy" id="258594"/>
    <lineage>
        <taxon>Bacteria</taxon>
        <taxon>Pseudomonadati</taxon>
        <taxon>Pseudomonadota</taxon>
        <taxon>Alphaproteobacteria</taxon>
        <taxon>Hyphomicrobiales</taxon>
        <taxon>Nitrobacteraceae</taxon>
        <taxon>Rhodopseudomonas</taxon>
    </lineage>
</organism>
<keyword id="KW-0131">Cell cycle</keyword>
<keyword id="KW-0132">Cell division</keyword>
<keyword id="KW-0133">Cell shape</keyword>
<keyword id="KW-0961">Cell wall biogenesis/degradation</keyword>
<keyword id="KW-0963">Cytoplasm</keyword>
<keyword id="KW-0573">Peptidoglycan synthesis</keyword>
<keyword id="KW-0670">Pyruvate</keyword>
<keyword id="KW-0808">Transferase</keyword>
<reference key="1">
    <citation type="journal article" date="2004" name="Nat. Biotechnol.">
        <title>Complete genome sequence of the metabolically versatile photosynthetic bacterium Rhodopseudomonas palustris.</title>
        <authorList>
            <person name="Larimer F.W."/>
            <person name="Chain P."/>
            <person name="Hauser L."/>
            <person name="Lamerdin J.E."/>
            <person name="Malfatti S."/>
            <person name="Do L."/>
            <person name="Land M.L."/>
            <person name="Pelletier D.A."/>
            <person name="Beatty J.T."/>
            <person name="Lang A.S."/>
            <person name="Tabita F.R."/>
            <person name="Gibson J.L."/>
            <person name="Hanson T.E."/>
            <person name="Bobst C."/>
            <person name="Torres y Torres J.L."/>
            <person name="Peres C."/>
            <person name="Harrison F.H."/>
            <person name="Gibson J."/>
            <person name="Harwood C.S."/>
        </authorList>
    </citation>
    <scope>NUCLEOTIDE SEQUENCE [LARGE SCALE GENOMIC DNA]</scope>
    <source>
        <strain>ATCC BAA-98 / CGA009</strain>
    </source>
</reference>
<comment type="function">
    <text evidence="1">Cell wall formation. Adds enolpyruvyl to UDP-N-acetylglucosamine.</text>
</comment>
<comment type="catalytic activity">
    <reaction evidence="1">
        <text>phosphoenolpyruvate + UDP-N-acetyl-alpha-D-glucosamine = UDP-N-acetyl-3-O-(1-carboxyvinyl)-alpha-D-glucosamine + phosphate</text>
        <dbReference type="Rhea" id="RHEA:18681"/>
        <dbReference type="ChEBI" id="CHEBI:43474"/>
        <dbReference type="ChEBI" id="CHEBI:57705"/>
        <dbReference type="ChEBI" id="CHEBI:58702"/>
        <dbReference type="ChEBI" id="CHEBI:68483"/>
        <dbReference type="EC" id="2.5.1.7"/>
    </reaction>
</comment>
<comment type="pathway">
    <text evidence="1">Cell wall biogenesis; peptidoglycan biosynthesis.</text>
</comment>
<comment type="subcellular location">
    <subcellularLocation>
        <location evidence="1">Cytoplasm</location>
    </subcellularLocation>
</comment>
<comment type="similarity">
    <text evidence="1">Belongs to the EPSP synthase family. MurA subfamily.</text>
</comment>
<feature type="chain" id="PRO_0000231254" description="UDP-N-acetylglucosamine 1-carboxyvinyltransferase">
    <location>
        <begin position="1"/>
        <end position="429"/>
    </location>
</feature>
<feature type="active site" description="Proton donor" evidence="1">
    <location>
        <position position="126"/>
    </location>
</feature>
<feature type="binding site" evidence="1">
    <location>
        <begin position="22"/>
        <end position="23"/>
    </location>
    <ligand>
        <name>phosphoenolpyruvate</name>
        <dbReference type="ChEBI" id="CHEBI:58702"/>
    </ligand>
</feature>
<feature type="binding site" evidence="1">
    <location>
        <position position="102"/>
    </location>
    <ligand>
        <name>UDP-N-acetyl-alpha-D-glucosamine</name>
        <dbReference type="ChEBI" id="CHEBI:57705"/>
    </ligand>
</feature>
<feature type="binding site" evidence="1">
    <location>
        <begin position="131"/>
        <end position="135"/>
    </location>
    <ligand>
        <name>UDP-N-acetyl-alpha-D-glucosamine</name>
        <dbReference type="ChEBI" id="CHEBI:57705"/>
    </ligand>
</feature>
<feature type="binding site" evidence="1">
    <location>
        <position position="316"/>
    </location>
    <ligand>
        <name>UDP-N-acetyl-alpha-D-glucosamine</name>
        <dbReference type="ChEBI" id="CHEBI:57705"/>
    </ligand>
</feature>
<feature type="binding site" evidence="1">
    <location>
        <position position="338"/>
    </location>
    <ligand>
        <name>UDP-N-acetyl-alpha-D-glucosamine</name>
        <dbReference type="ChEBI" id="CHEBI:57705"/>
    </ligand>
</feature>
<feature type="modified residue" description="2-(S-cysteinyl)pyruvic acid O-phosphothioketal" evidence="1">
    <location>
        <position position="126"/>
    </location>
</feature>
<sequence>MDRIKIIGGNELRGTIPISGAKNAALPLMIAALLTDETLILDNVPRLADVALLQRILGNHGVDIMAAGKRPGDHEYQGQTLHISAKTIVDTTAPYDLVSKMRASFWVIAPLVARMHEAKVSLPGGCAIGTRPVDLLIMALEKLGAEITIDGGYVIAKAPGGLKGATIAFPKVTVSGTHVAVMAAALAKGTTIIDNAACEPEIVDVADCLNKMGAKITGAGTPRITIEGVAKLHGARHTVLPDRIETGTYAMAVAMAGGEVQLSGARPELLQAALDVLTQAGATITVNNDGIKVARNGAGISPVTVTTAPFPGFPTDLQAQLMALMTRAKGASHITETIFENRFMHVQELARFGAKISLDGETATIDGVERLRGAPVMATDLRASVSLVIAALAAEGETMVNRIYHLDRGFERLEEKLSACGANIERISG</sequence>
<gene>
    <name evidence="1" type="primary">murA</name>
    <name type="ordered locus">RPA4533</name>
</gene>
<protein>
    <recommendedName>
        <fullName evidence="1">UDP-N-acetylglucosamine 1-carboxyvinyltransferase</fullName>
        <ecNumber evidence="1">2.5.1.7</ecNumber>
    </recommendedName>
    <alternativeName>
        <fullName evidence="1">Enoylpyruvate transferase</fullName>
    </alternativeName>
    <alternativeName>
        <fullName evidence="1">UDP-N-acetylglucosamine enolpyruvyl transferase</fullName>
        <shortName evidence="1">EPT</shortName>
    </alternativeName>
</protein>